<name>CRYD_DANRE</name>
<evidence type="ECO:0000250" key="1"/>
<evidence type="ECO:0000256" key="2">
    <source>
        <dbReference type="SAM" id="MobiDB-lite"/>
    </source>
</evidence>
<evidence type="ECO:0000269" key="3">
    <source>
    </source>
</evidence>
<evidence type="ECO:0000305" key="4"/>
<feature type="chain" id="PRO_0000235316" description="Cryptochrome DASH">
    <location>
        <begin position="1"/>
        <end position="520"/>
    </location>
</feature>
<feature type="domain" description="Photolyase/cryptochrome alpha/beta">
    <location>
        <begin position="5"/>
        <end position="141"/>
    </location>
</feature>
<feature type="region of interest" description="Disordered" evidence="2">
    <location>
        <begin position="479"/>
        <end position="504"/>
    </location>
</feature>
<feature type="sequence conflict" description="In Ref. 2; AAH98514." evidence="4" ref="2">
    <original>C</original>
    <variation>S</variation>
    <location>
        <position position="38"/>
    </location>
</feature>
<feature type="sequence conflict" description="In Ref. 2; AAH98514." evidence="4" ref="2">
    <original>C</original>
    <variation>F</variation>
    <location>
        <position position="93"/>
    </location>
</feature>
<feature type="sequence conflict" description="In Ref. 1; BAD08600." evidence="4" ref="1">
    <original>N</original>
    <variation>K</variation>
    <location>
        <position position="324"/>
    </location>
</feature>
<comment type="function">
    <text evidence="1 3">May have a photoreceptor function (By similarity). Has weak cyclobutyl pyrimidine photolyase activity when expressed in E.coli and when tested in vitro.</text>
</comment>
<comment type="cofactor">
    <cofactor evidence="3">
        <name>FAD</name>
        <dbReference type="ChEBI" id="CHEBI:57692"/>
    </cofactor>
    <text evidence="3">Binds 1 FAD per subunit.</text>
</comment>
<comment type="cofactor">
    <cofactor evidence="3">
        <name>(6R)-5,10-methylene-5,6,7,8-tetrahydrofolate</name>
        <dbReference type="ChEBI" id="CHEBI:15636"/>
    </cofactor>
    <text evidence="3">Binds 1 5,10-methenyltetrahydrofolate (MTHF) non-covalently per subunit.</text>
</comment>
<comment type="similarity">
    <text evidence="4">Belongs to the DNA photolyase class-1 family.</text>
</comment>
<dbReference type="EMBL" id="AB120759">
    <property type="protein sequence ID" value="BAD08600.1"/>
    <property type="molecule type" value="mRNA"/>
</dbReference>
<dbReference type="EMBL" id="BC098514">
    <property type="protein sequence ID" value="AAH98514.1"/>
    <property type="molecule type" value="mRNA"/>
</dbReference>
<dbReference type="RefSeq" id="NP_991249.1">
    <property type="nucleotide sequence ID" value="NM_205686.1"/>
</dbReference>
<dbReference type="SMR" id="Q4KML2"/>
<dbReference type="STRING" id="7955.ENSDARP00000121988"/>
<dbReference type="PaxDb" id="7955-ENSDARP00000121988"/>
<dbReference type="GeneID" id="402986"/>
<dbReference type="KEGG" id="dre:402986"/>
<dbReference type="AGR" id="ZFIN:ZDB-GENE-040617-2"/>
<dbReference type="CTD" id="402986"/>
<dbReference type="ZFIN" id="ZDB-GENE-040617-2">
    <property type="gene designation" value="cry-dash"/>
</dbReference>
<dbReference type="eggNOG" id="KOG0133">
    <property type="taxonomic scope" value="Eukaryota"/>
</dbReference>
<dbReference type="InParanoid" id="Q4KML2"/>
<dbReference type="OrthoDB" id="435881at2759"/>
<dbReference type="PhylomeDB" id="Q4KML2"/>
<dbReference type="PRO" id="PR:Q4KML2"/>
<dbReference type="Proteomes" id="UP000000437">
    <property type="component" value="Chromosome 24"/>
</dbReference>
<dbReference type="GO" id="GO:0003684">
    <property type="term" value="F:damaged DNA binding"/>
    <property type="evidence" value="ECO:0000314"/>
    <property type="project" value="ZFIN"/>
</dbReference>
<dbReference type="GO" id="GO:0003904">
    <property type="term" value="F:deoxyribodipyrimidine photo-lyase activity"/>
    <property type="evidence" value="ECO:0000314"/>
    <property type="project" value="ZFIN"/>
</dbReference>
<dbReference type="GO" id="GO:0071949">
    <property type="term" value="F:FAD binding"/>
    <property type="evidence" value="ECO:0000318"/>
    <property type="project" value="GO_Central"/>
</dbReference>
<dbReference type="GO" id="GO:0050660">
    <property type="term" value="F:flavin adenine dinucleotide binding"/>
    <property type="evidence" value="ECO:0000314"/>
    <property type="project" value="ZFIN"/>
</dbReference>
<dbReference type="GO" id="GO:0000719">
    <property type="term" value="P:photoreactive repair"/>
    <property type="evidence" value="ECO:0000314"/>
    <property type="project" value="ZFIN"/>
</dbReference>
<dbReference type="Gene3D" id="1.25.40.80">
    <property type="match status" value="1"/>
</dbReference>
<dbReference type="Gene3D" id="1.10.579.10">
    <property type="entry name" value="DNA Cyclobutane Dipyrimidine Photolyase, subunit A, domain 3"/>
    <property type="match status" value="1"/>
</dbReference>
<dbReference type="Gene3D" id="3.40.50.620">
    <property type="entry name" value="HUPs"/>
    <property type="match status" value="1"/>
</dbReference>
<dbReference type="InterPro" id="IPR014133">
    <property type="entry name" value="Cry_DASH"/>
</dbReference>
<dbReference type="InterPro" id="IPR036134">
    <property type="entry name" value="Crypto/Photolyase_FAD-like_sf"/>
</dbReference>
<dbReference type="InterPro" id="IPR036155">
    <property type="entry name" value="Crypto/Photolyase_N_sf"/>
</dbReference>
<dbReference type="InterPro" id="IPR005101">
    <property type="entry name" value="Cryptochr/Photolyase_FAD-bd"/>
</dbReference>
<dbReference type="InterPro" id="IPR002081">
    <property type="entry name" value="Cryptochrome/DNA_photolyase_1"/>
</dbReference>
<dbReference type="InterPro" id="IPR006050">
    <property type="entry name" value="DNA_photolyase_N"/>
</dbReference>
<dbReference type="InterPro" id="IPR014729">
    <property type="entry name" value="Rossmann-like_a/b/a_fold"/>
</dbReference>
<dbReference type="NCBIfam" id="TIGR02765">
    <property type="entry name" value="crypto_DASH"/>
    <property type="match status" value="1"/>
</dbReference>
<dbReference type="PANTHER" id="PTHR11455">
    <property type="entry name" value="CRYPTOCHROME"/>
    <property type="match status" value="1"/>
</dbReference>
<dbReference type="PANTHER" id="PTHR11455:SF22">
    <property type="entry name" value="CRYPTOCHROME DASH"/>
    <property type="match status" value="1"/>
</dbReference>
<dbReference type="Pfam" id="PF00875">
    <property type="entry name" value="DNA_photolyase"/>
    <property type="match status" value="1"/>
</dbReference>
<dbReference type="Pfam" id="PF03441">
    <property type="entry name" value="FAD_binding_7"/>
    <property type="match status" value="1"/>
</dbReference>
<dbReference type="PRINTS" id="PR00147">
    <property type="entry name" value="DNAPHOTLYASE"/>
</dbReference>
<dbReference type="SUPFAM" id="SSF48173">
    <property type="entry name" value="Cryptochrome/photolyase FAD-binding domain"/>
    <property type="match status" value="1"/>
</dbReference>
<dbReference type="SUPFAM" id="SSF52425">
    <property type="entry name" value="Cryptochrome/photolyase, N-terminal domain"/>
    <property type="match status" value="1"/>
</dbReference>
<dbReference type="PROSITE" id="PS51645">
    <property type="entry name" value="PHR_CRY_ALPHA_BETA"/>
    <property type="match status" value="1"/>
</dbReference>
<keyword id="KW-0157">Chromophore</keyword>
<keyword id="KW-0274">FAD</keyword>
<keyword id="KW-0285">Flavoprotein</keyword>
<keyword id="KW-1185">Reference proteome</keyword>
<sequence>MSASRTVICLLRNDLRLHDNEVFHWAQRNAEHIIPLYCFDPRHYQGTYHYNFPKTGPFRLRFLLDSVKDLRALLKKHGSTLLVRQGKPEDVVCELIKQLGSVSTVAFHEEVASEEKSVEEKLKEICCQNKVRVQTFWGSTLYHRDDLPFSHIGGLPDVYTQFRKAVEAQGRVRPVLSTPEQVKSPPSGLEEGPIPTFDSLGQTEPLDDCRSAFPCRGGETEALARLKHYFWDTNAVATYKETRNGMIGVDFSTKFSPWLALGCISPRYIYEQIKKYEVERTANQSTYWVIFELLWRDYFKFVALKYGNRIFYMNGLQDKHVPWNTDMKMFDAWKEGRTGVPFVDANMRELALTGFMSNRGRQNVASFLTKDLGLDWRLGAEWFEYLLVDHDVCSNYGNWLYSAGIGNDPRENRKFNMIKQGLDYDNNGDYVRQWVPELRGIKGGDVHTPWTLSNSALSHAQVSLNQTYPCPIITAPEWSRHVNNKSSGPSSSKGRKGSSYTARQHKDRGIDFYFSKNKHF</sequence>
<organism>
    <name type="scientific">Danio rerio</name>
    <name type="common">Zebrafish</name>
    <name type="synonym">Brachydanio rerio</name>
    <dbReference type="NCBI Taxonomy" id="7955"/>
    <lineage>
        <taxon>Eukaryota</taxon>
        <taxon>Metazoa</taxon>
        <taxon>Chordata</taxon>
        <taxon>Craniata</taxon>
        <taxon>Vertebrata</taxon>
        <taxon>Euteleostomi</taxon>
        <taxon>Actinopterygii</taxon>
        <taxon>Neopterygii</taxon>
        <taxon>Teleostei</taxon>
        <taxon>Ostariophysi</taxon>
        <taxon>Cypriniformes</taxon>
        <taxon>Danionidae</taxon>
        <taxon>Danioninae</taxon>
        <taxon>Danio</taxon>
    </lineage>
</organism>
<protein>
    <recommendedName>
        <fullName>Cryptochrome DASH</fullName>
    </recommendedName>
    <alternativeName>
        <fullName>Protein CRY-DASH</fullName>
        <shortName>zCRY-DASH</shortName>
    </alternativeName>
</protein>
<reference key="1">
    <citation type="journal article" date="2004" name="Genes Cells">
        <title>Identification of cryptochrome DASH from vertebrates.</title>
        <authorList>
            <person name="Daiyasu H."/>
            <person name="Ishikawa T."/>
            <person name="Kuma K."/>
            <person name="Iwai S."/>
            <person name="Todo T."/>
            <person name="Toh H."/>
        </authorList>
    </citation>
    <scope>NUCLEOTIDE SEQUENCE [MRNA]</scope>
    <scope>FUNCTION</scope>
    <scope>COFACTOR</scope>
</reference>
<reference key="2">
    <citation type="submission" date="2005-07" db="EMBL/GenBank/DDBJ databases">
        <authorList>
            <consortium name="NIH - Zebrafish Gene Collection (ZGC) project"/>
        </authorList>
    </citation>
    <scope>NUCLEOTIDE SEQUENCE [LARGE SCALE MRNA]</scope>
    <source>
        <tissue>Ovary</tissue>
    </source>
</reference>
<proteinExistence type="evidence at transcript level"/>
<accession>Q4KML2</accession>
<accession>Q75WS5</accession>
<gene>
    <name type="primary">cry-dash</name>
</gene>